<accession>P92507</accession>
<keyword id="KW-0002">3D-structure</keyword>
<keyword id="KW-0903">Direct protein sequencing</keyword>
<keyword id="KW-0249">Electron transport</keyword>
<keyword id="KW-0349">Heme</keyword>
<keyword id="KW-0408">Iron</keyword>
<keyword id="KW-0472">Membrane</keyword>
<keyword id="KW-0479">Metal-binding</keyword>
<keyword id="KW-0496">Mitochondrion</keyword>
<keyword id="KW-0999">Mitochondrion inner membrane</keyword>
<keyword id="KW-0809">Transit peptide</keyword>
<keyword id="KW-0812">Transmembrane</keyword>
<keyword id="KW-1133">Transmembrane helix</keyword>
<keyword id="KW-0813">Transport</keyword>
<feature type="transit peptide" description="Mitochondrion" evidence="10">
    <location>
        <begin position="1"/>
        <end position="25"/>
    </location>
</feature>
<feature type="chain" id="PRO_0000006490" description="Succinate dehydrogenase [ubiquinone] cytochrome b small subunit 1, mitochondrial">
    <location>
        <begin position="26"/>
        <end position="156"/>
    </location>
</feature>
<feature type="topological domain" description="Mitochondrial matrix" evidence="14">
    <location>
        <begin position="26"/>
        <end position="59"/>
    </location>
</feature>
<feature type="transmembrane region" description="Helical" evidence="14">
    <location>
        <begin position="60"/>
        <end position="78"/>
    </location>
</feature>
<feature type="topological domain" description="Mitochondrial intermembrane" evidence="14">
    <location>
        <begin position="79"/>
        <end position="83"/>
    </location>
</feature>
<feature type="transmembrane region" description="Helical" evidence="14">
    <location>
        <begin position="84"/>
        <end position="104"/>
    </location>
</feature>
<feature type="topological domain" description="Mitochondrial matrix" evidence="14">
    <location>
        <begin position="105"/>
        <end position="119"/>
    </location>
</feature>
<feature type="transmembrane region" description="Helical" evidence="14">
    <location>
        <begin position="120"/>
        <end position="141"/>
    </location>
</feature>
<feature type="topological domain" description="Mitochondrial intermembrane" evidence="14">
    <location>
        <begin position="142"/>
        <end position="156"/>
    </location>
</feature>
<feature type="binding site" description="axial binding residue" evidence="5 6 15 16 17 18 19 20 21 22 23 24 25 26">
    <location>
        <position position="95"/>
    </location>
    <ligand>
        <name>heme b</name>
        <dbReference type="ChEBI" id="CHEBI:60344"/>
        <note>ligand shared with large subunit</note>
    </ligand>
    <ligandPart>
        <name>Fe</name>
        <dbReference type="ChEBI" id="CHEBI:18248"/>
    </ligandPart>
</feature>
<feature type="binding site" evidence="5 15">
    <location>
        <position position="107"/>
    </location>
    <ligand>
        <name>a rhodoquinol</name>
        <dbReference type="ChEBI" id="CHEBI:194433"/>
        <note>ligand shared with IP and large subunit</note>
    </ligand>
</feature>
<feature type="turn" evidence="27">
    <location>
        <begin position="42"/>
        <end position="48"/>
    </location>
</feature>
<feature type="helix" evidence="27">
    <location>
        <begin position="56"/>
        <end position="78"/>
    </location>
</feature>
<feature type="helix" evidence="27">
    <location>
        <begin position="82"/>
        <end position="107"/>
    </location>
</feature>
<feature type="helix" evidence="27">
    <location>
        <begin position="110"/>
        <end position="113"/>
    </location>
</feature>
<feature type="helix" evidence="27">
    <location>
        <begin position="115"/>
        <end position="142"/>
    </location>
</feature>
<feature type="helix" evidence="27">
    <location>
        <begin position="146"/>
        <end position="155"/>
    </location>
</feature>
<evidence type="ECO:0000250" key="1">
    <source>
        <dbReference type="UniProtKB" id="D0VWV4"/>
    </source>
</evidence>
<evidence type="ECO:0000269" key="2">
    <source>
    </source>
</evidence>
<evidence type="ECO:0000269" key="3">
    <source>
    </source>
</evidence>
<evidence type="ECO:0000269" key="4">
    <source>
    </source>
</evidence>
<evidence type="ECO:0000269" key="5">
    <source>
    </source>
</evidence>
<evidence type="ECO:0000269" key="6">
    <source>
    </source>
</evidence>
<evidence type="ECO:0000269" key="7">
    <source>
    </source>
</evidence>
<evidence type="ECO:0000269" key="8">
    <source>
    </source>
</evidence>
<evidence type="ECO:0000269" key="9">
    <source>
    </source>
</evidence>
<evidence type="ECO:0000269" key="10">
    <source ref="2"/>
</evidence>
<evidence type="ECO:0000303" key="11">
    <source>
    </source>
</evidence>
<evidence type="ECO:0000303" key="12">
    <source>
    </source>
</evidence>
<evidence type="ECO:0000305" key="13"/>
<evidence type="ECO:0000305" key="14">
    <source>
    </source>
</evidence>
<evidence type="ECO:0007744" key="15">
    <source>
        <dbReference type="PDB" id="3VR8"/>
    </source>
</evidence>
<evidence type="ECO:0007744" key="16">
    <source>
        <dbReference type="PDB" id="3VR9"/>
    </source>
</evidence>
<evidence type="ECO:0007744" key="17">
    <source>
        <dbReference type="PDB" id="3VRA"/>
    </source>
</evidence>
<evidence type="ECO:0007744" key="18">
    <source>
        <dbReference type="PDB" id="3VRB"/>
    </source>
</evidence>
<evidence type="ECO:0007744" key="19">
    <source>
        <dbReference type="PDB" id="4YSX"/>
    </source>
</evidence>
<evidence type="ECO:0007744" key="20">
    <source>
        <dbReference type="PDB" id="4YSY"/>
    </source>
</evidence>
<evidence type="ECO:0007744" key="21">
    <source>
        <dbReference type="PDB" id="4YSZ"/>
    </source>
</evidence>
<evidence type="ECO:0007744" key="22">
    <source>
        <dbReference type="PDB" id="4YT0"/>
    </source>
</evidence>
<evidence type="ECO:0007744" key="23">
    <source>
        <dbReference type="PDB" id="4YTM"/>
    </source>
</evidence>
<evidence type="ECO:0007744" key="24">
    <source>
        <dbReference type="PDB" id="4YTN"/>
    </source>
</evidence>
<evidence type="ECO:0007744" key="25">
    <source>
        <dbReference type="PDB" id="5C2T"/>
    </source>
</evidence>
<evidence type="ECO:0007744" key="26">
    <source>
        <dbReference type="PDB" id="5C3J"/>
    </source>
</evidence>
<evidence type="ECO:0007829" key="27">
    <source>
        <dbReference type="PDB" id="4YSX"/>
    </source>
</evidence>
<protein>
    <recommendedName>
        <fullName evidence="13">Succinate dehydrogenase [ubiquinone] cytochrome b small subunit 1, mitochondrial</fullName>
        <shortName evidence="11">CybSA</shortName>
    </recommendedName>
    <alternativeName>
        <fullName evidence="12">Cytochrome b558 small subunit</fullName>
    </alternativeName>
    <alternativeName>
        <fullName evidence="13">Succinate-ubiquinone reductase membrane anchor subunit</fullName>
    </alternativeName>
</protein>
<proteinExistence type="evidence at protein level"/>
<gene>
    <name evidence="11" type="primary">SDHD1</name>
</gene>
<name>DHSD1_ASCSU</name>
<organism>
    <name type="scientific">Ascaris suum</name>
    <name type="common">Pig roundworm</name>
    <name type="synonym">Ascaris lumbricoides</name>
    <dbReference type="NCBI Taxonomy" id="6253"/>
    <lineage>
        <taxon>Eukaryota</taxon>
        <taxon>Metazoa</taxon>
        <taxon>Ecdysozoa</taxon>
        <taxon>Nematoda</taxon>
        <taxon>Chromadorea</taxon>
        <taxon>Rhabditida</taxon>
        <taxon>Spirurina</taxon>
        <taxon>Ascaridomorpha</taxon>
        <taxon>Ascaridoidea</taxon>
        <taxon>Ascarididae</taxon>
        <taxon>Ascaris</taxon>
    </lineage>
</organism>
<dbReference type="EMBL" id="D78158">
    <property type="protein sequence ID" value="BAA11233.1"/>
    <property type="molecule type" value="mRNA"/>
</dbReference>
<dbReference type="PDB" id="3VR8">
    <property type="method" value="X-ray"/>
    <property type="resolution" value="2.81 A"/>
    <property type="chains" value="D/H=1-156"/>
</dbReference>
<dbReference type="PDB" id="3VR9">
    <property type="method" value="X-ray"/>
    <property type="resolution" value="3.01 A"/>
    <property type="chains" value="D/H=1-156"/>
</dbReference>
<dbReference type="PDB" id="3VRA">
    <property type="method" value="X-ray"/>
    <property type="resolution" value="3.44 A"/>
    <property type="chains" value="D/H=1-156"/>
</dbReference>
<dbReference type="PDB" id="3VRB">
    <property type="method" value="X-ray"/>
    <property type="resolution" value="2.91 A"/>
    <property type="chains" value="D/H=1-156"/>
</dbReference>
<dbReference type="PDB" id="4YSX">
    <property type="method" value="X-ray"/>
    <property type="resolution" value="2.25 A"/>
    <property type="chains" value="D/H=1-156"/>
</dbReference>
<dbReference type="PDB" id="4YSY">
    <property type="method" value="X-ray"/>
    <property type="resolution" value="3.10 A"/>
    <property type="chains" value="D/H=1-156"/>
</dbReference>
<dbReference type="PDB" id="4YSZ">
    <property type="method" value="X-ray"/>
    <property type="resolution" value="3.30 A"/>
    <property type="chains" value="D/H=1-156"/>
</dbReference>
<dbReference type="PDB" id="4YT0">
    <property type="method" value="X-ray"/>
    <property type="resolution" value="3.66 A"/>
    <property type="chains" value="D/H=1-156"/>
</dbReference>
<dbReference type="PDB" id="4YTM">
    <property type="method" value="X-ray"/>
    <property type="resolution" value="3.40 A"/>
    <property type="chains" value="D/H=1-156"/>
</dbReference>
<dbReference type="PDB" id="4YTN">
    <property type="method" value="X-ray"/>
    <property type="resolution" value="3.00 A"/>
    <property type="chains" value="D/H=1-156"/>
</dbReference>
<dbReference type="PDB" id="5C2T">
    <property type="method" value="X-ray"/>
    <property type="resolution" value="2.75 A"/>
    <property type="chains" value="D/H=1-156"/>
</dbReference>
<dbReference type="PDB" id="5C3J">
    <property type="method" value="X-ray"/>
    <property type="resolution" value="2.80 A"/>
    <property type="chains" value="D/H=1-156"/>
</dbReference>
<dbReference type="PDBsum" id="3VR8"/>
<dbReference type="PDBsum" id="3VR9"/>
<dbReference type="PDBsum" id="3VRA"/>
<dbReference type="PDBsum" id="3VRB"/>
<dbReference type="PDBsum" id="4YSX"/>
<dbReference type="PDBsum" id="4YSY"/>
<dbReference type="PDBsum" id="4YSZ"/>
<dbReference type="PDBsum" id="4YT0"/>
<dbReference type="PDBsum" id="4YTM"/>
<dbReference type="PDBsum" id="4YTN"/>
<dbReference type="PDBsum" id="5C2T"/>
<dbReference type="PDBsum" id="5C3J"/>
<dbReference type="SMR" id="P92507"/>
<dbReference type="EnsemblMetazoa" id="AgR001_g147_t01">
    <property type="protein sequence ID" value="AgR001_g147_t01"/>
    <property type="gene ID" value="AgR001_g147"/>
</dbReference>
<dbReference type="EnsemblMetazoa" id="AgR001_g147_t02">
    <property type="protein sequence ID" value="AgR001_g147_t02"/>
    <property type="gene ID" value="AgR001_g147"/>
</dbReference>
<dbReference type="BioCyc" id="MetaCyc:MONOMER-18286"/>
<dbReference type="BRENDA" id="1.3.5.4">
    <property type="organism ID" value="474"/>
</dbReference>
<dbReference type="SABIO-RK" id="P92507"/>
<dbReference type="EvolutionaryTrace" id="P92507"/>
<dbReference type="GO" id="GO:0005743">
    <property type="term" value="C:mitochondrial inner membrane"/>
    <property type="evidence" value="ECO:0000250"/>
    <property type="project" value="UniProtKB"/>
</dbReference>
<dbReference type="GO" id="GO:0031966">
    <property type="term" value="C:mitochondrial membrane"/>
    <property type="evidence" value="ECO:0000314"/>
    <property type="project" value="UniProtKB"/>
</dbReference>
<dbReference type="GO" id="GO:0045273">
    <property type="term" value="C:respiratory chain complex II (succinate dehydrogenase)"/>
    <property type="evidence" value="ECO:0000314"/>
    <property type="project" value="UniProtKB"/>
</dbReference>
<dbReference type="GO" id="GO:0020037">
    <property type="term" value="F:heme binding"/>
    <property type="evidence" value="ECO:0000314"/>
    <property type="project" value="UniProtKB"/>
</dbReference>
<dbReference type="GO" id="GO:0046872">
    <property type="term" value="F:metal ion binding"/>
    <property type="evidence" value="ECO:0007669"/>
    <property type="project" value="UniProtKB-KW"/>
</dbReference>
<dbReference type="GO" id="GO:0048039">
    <property type="term" value="F:ubiquinone binding"/>
    <property type="evidence" value="ECO:0000250"/>
    <property type="project" value="UniProtKB"/>
</dbReference>
<dbReference type="GO" id="GO:0006121">
    <property type="term" value="P:mitochondrial electron transport, succinate to ubiquinone"/>
    <property type="evidence" value="ECO:0007669"/>
    <property type="project" value="TreeGrafter"/>
</dbReference>
<dbReference type="GO" id="GO:0006099">
    <property type="term" value="P:tricarboxylic acid cycle"/>
    <property type="evidence" value="ECO:0007669"/>
    <property type="project" value="TreeGrafter"/>
</dbReference>
<dbReference type="CDD" id="cd03496">
    <property type="entry name" value="SQR_TypeC_CybS"/>
    <property type="match status" value="1"/>
</dbReference>
<dbReference type="FunFam" id="1.20.1300.10:FF:000020">
    <property type="entry name" value="Succinate dehydrogenase [ubiquinone] cytochrome b small subunit, mitochondrial"/>
    <property type="match status" value="1"/>
</dbReference>
<dbReference type="Gene3D" id="1.20.1300.10">
    <property type="entry name" value="Fumarate reductase/succinate dehydrogenase, transmembrane subunit"/>
    <property type="match status" value="1"/>
</dbReference>
<dbReference type="InterPro" id="IPR007992">
    <property type="entry name" value="CybS"/>
</dbReference>
<dbReference type="InterPro" id="IPR034804">
    <property type="entry name" value="SQR/QFR_C/D"/>
</dbReference>
<dbReference type="PANTHER" id="PTHR13337">
    <property type="entry name" value="SUCCINATE DEHYDROGENASE"/>
    <property type="match status" value="1"/>
</dbReference>
<dbReference type="PANTHER" id="PTHR13337:SF2">
    <property type="entry name" value="SUCCINATE DEHYDROGENASE [UBIQUINONE] CYTOCHROME B SMALL SUBUNIT, MITOCHONDRIAL"/>
    <property type="match status" value="1"/>
</dbReference>
<dbReference type="Pfam" id="PF05328">
    <property type="entry name" value="CybS"/>
    <property type="match status" value="1"/>
</dbReference>
<reference key="1">
    <citation type="journal article" date="1996" name="Biochim. Biophys. Acta">
        <title>Cloning of a cDNA encoding the small subunit of cytochrome b558 (cybS) of mitochondrial fumarate reductase (complex II) from adult Ascaris suum.</title>
        <authorList>
            <person name="Saruta F."/>
            <person name="Hirawake H."/>
            <person name="Takamiya S."/>
            <person name="Ma Y.-C."/>
            <person name="Aoki T."/>
            <person name="Sekimizu K."/>
            <person name="Kojima S."/>
            <person name="Kita K."/>
        </authorList>
    </citation>
    <scope>NUCLEOTIDE SEQUENCE [MRNA]</scope>
    <source>
        <tissue>Muscle</tissue>
    </source>
</reference>
<reference key="2">
    <citation type="book" date="1990" name="Highlights in Ubiquinone Research">
        <editorList>
            <person name="Lenaz G."/>
            <person name="Barnabei O."/>
            <person name="Rabbi A."/>
            <person name="Battino M."/>
        </editorList>
        <authorList>
            <person name="Kita K."/>
            <person name="Takamiya S."/>
            <person name="Furushima R."/>
            <person name="Suzuki H."/>
            <person name="Ozawa T."/>
            <person name="Oya H."/>
        </authorList>
    </citation>
    <scope>PROTEIN SEQUENCE OF 26-55</scope>
</reference>
<reference key="3">
    <citation type="journal article" date="1988" name="Biochim. Biophys. Acta">
        <title>Electron-transfer complexes of Ascaris suum muscle mitochondria. III. Composition and fumarate reductase activity of complex II.</title>
        <authorList>
            <person name="Kita K."/>
            <person name="Takamiya S."/>
            <person name="Furushima R."/>
            <person name="Ma Y.C."/>
            <person name="Suzuki H."/>
            <person name="Ozawa T."/>
            <person name="Oya H."/>
        </authorList>
    </citation>
    <scope>FUNCTION</scope>
    <scope>IDENTIFICATION IN THE MITOCHONDRIAL RESPIRATORY CHAIN COMPLEX II</scope>
    <scope>SUBCELLULAR LOCATION</scope>
    <scope>TISSUE SPECIFICITY</scope>
</reference>
<reference key="4">
    <citation type="journal article" date="1993" name="Biochim. Biophys. Acta">
        <title>Developmental changes in the respiratory chain of Ascaris mitochondria.</title>
        <authorList>
            <person name="Takamiya S."/>
            <person name="Kita K."/>
            <person name="Wang H."/>
            <person name="Weinstein P.P."/>
            <person name="Hiraishi A."/>
            <person name="Oya H."/>
            <person name="Aoki T."/>
        </authorList>
    </citation>
    <scope>FUNCTION</scope>
    <scope>IDENTIFICATION IN THE MITOCHONDRIAL RESPIRATORY CHAIN COMPLEX II</scope>
    <scope>SUBCELLULAR LOCATION</scope>
    <scope>TISSUE SPECIFICITY</scope>
</reference>
<reference key="5">
    <citation type="journal article" date="1995" name="J. Biol. Chem.">
        <title>Stage-specific isoforms of complex II (succinate-ubiquinone oxidoreductase) in mitochondria from the parasitic nematode, Ascaris suum.</title>
        <authorList>
            <person name="Saruta F."/>
            <person name="Kuramochi T."/>
            <person name="Nakamura K."/>
            <person name="Takamiya S."/>
            <person name="Yu Y."/>
            <person name="Aoki T."/>
            <person name="Sekimizu K."/>
            <person name="Kojima S."/>
            <person name="Kita K."/>
        </authorList>
    </citation>
    <scope>FUNCTION</scope>
    <scope>IDENTIFICATION IN THE MITOCHONDRIAL RESPIRATORY CHAIN COMPLEX II</scope>
    <scope>SUBCELLULAR LOCATION</scope>
    <scope>TISSUE SPECIFICITY</scope>
</reference>
<reference key="6">
    <citation type="journal article" date="2000" name="Mol. Biochem. Parasitol.">
        <title>Stage-specific isoforms of Ascaris suum complex. II: The fumarate reductase of the parasitic adult and the succinate dehydrogenase of free-living larvae share a common iron-sulfur subunit.</title>
        <authorList>
            <person name="Amino H."/>
            <person name="Wang H."/>
            <person name="Hirawake H."/>
            <person name="Saruta F."/>
            <person name="Mizuchi D."/>
            <person name="Mineki R."/>
            <person name="Shindo N."/>
            <person name="Murayama K."/>
            <person name="Takamiya S."/>
            <person name="Aoki T."/>
            <person name="Kojima S."/>
            <person name="Kita K."/>
        </authorList>
    </citation>
    <scope>FUNCTION</scope>
    <scope>IDENTIFICATION IN THE MITOCHONDRIAL RESPIRATORY CHAIN COMPLEX II</scope>
    <scope>SUBCELLULAR LOCATION</scope>
    <scope>TISSUE SPECIFICITY</scope>
    <scope>DEVELOPMENTAL STAGE</scope>
</reference>
<reference key="7">
    <citation type="journal article" date="2003" name="Mol. Biochem. Parasitol.">
        <title>Isolation and characterization of the stage-specific cytochrome b small subunit (CybS) of Ascaris suum complex II from the aerobic respiratory chain of larval mitochondria.</title>
        <authorList>
            <person name="Amino H."/>
            <person name="Osanai A."/>
            <person name="Miyadera H."/>
            <person name="Shinjyo N."/>
            <person name="Tomitsuka E."/>
            <person name="Taka H."/>
            <person name="Mineki R."/>
            <person name="Murayama K."/>
            <person name="Takamiya S."/>
            <person name="Aoki T."/>
            <person name="Miyoshi H."/>
            <person name="Sakamoto K."/>
            <person name="Kojima S."/>
            <person name="Kita K."/>
        </authorList>
    </citation>
    <scope>IDENTIFICATION IN THE MITOCHONDRIAL RESPIRATORY CHAIN COMPLEX II</scope>
    <scope>SUBCELLULAR LOCATION</scope>
    <scope>TISSUE SPECIFICITY</scope>
    <scope>DEVELOPMENTAL STAGE</scope>
</reference>
<reference key="8">
    <citation type="journal article" date="2008" name="Parasitol. Int.">
        <title>Change of subunit composition of mitochondrial complex II (succinate-ubiquinone reductase/quinol-fumarate reductase) in Ascaris suum during the migration in the experimental host.</title>
        <authorList>
            <person name="Iwata F."/>
            <person name="Shinjyo N."/>
            <person name="Amino H."/>
            <person name="Sakamoto K."/>
            <person name="Islam M.K."/>
            <person name="Tsuji N."/>
            <person name="Kita K."/>
        </authorList>
    </citation>
    <scope>FUNCTION</scope>
    <scope>IDENTIFICATION IN THE MITOCHONDRIAL RESPIRATORY CHAIN COMPLEX II</scope>
    <scope>SUBCELLULAR LOCATION</scope>
    <scope>TISSUE SPECIFICITY</scope>
    <scope>DEVELOPMENTAL STAGE</scope>
</reference>
<reference evidence="15 16 17 18" key="9">
    <citation type="journal article" date="2012" name="J. Biochem.">
        <title>Crystal structure of mitochondrial quinol-fumarate reductase from the parasitic nematode Ascaris suum.</title>
        <authorList>
            <person name="Shimizu H."/>
            <person name="Osanai A."/>
            <person name="Sakamoto K."/>
            <person name="Inaoka D.K."/>
            <person name="Shiba T."/>
            <person name="Harada S."/>
            <person name="Kita K."/>
        </authorList>
    </citation>
    <scope>X-RAY CRYSTALLOGRAPHY (2.81 ANGSTROMS) IN COMPLEX WITH HEME; RHODOQUINONE ANALOG; FP; CYBL AND IP</scope>
    <scope>COFACTOR</scope>
    <scope>IDENTIFICATION IN THE MITOCHONDRIAL RESPIRATORY CHAIN COMPLEX II</scope>
    <scope>SUBCELLULAR LOCATION</scope>
    <scope>TISSUE SPECIFICITY</scope>
    <scope>TOPOLOGY</scope>
</reference>
<reference evidence="19 20 21 22 23 24 25 26" key="10">
    <citation type="journal article" date="2015" name="Int. J. Mol. Sci.">
        <title>Structural Insights into the Molecular Design of Flutolanil Derivatives Targeted for Fumarate Respiration of Parasite Mitochondria.</title>
        <authorList>
            <person name="Inaoka D.K."/>
            <person name="Shiba T."/>
            <person name="Sato D."/>
            <person name="Balogun E.O."/>
            <person name="Sasaki T."/>
            <person name="Nagahama M."/>
            <person name="Oda M."/>
            <person name="Matsuoka S."/>
            <person name="Ohmori J."/>
            <person name="Honma T."/>
            <person name="Inoue M."/>
            <person name="Kita K."/>
            <person name="Harada S."/>
        </authorList>
    </citation>
    <scope>X-RAY CRYSTALLOGRAPHY (2.25 ANGSTROMS) IN COMPLEX WITH HEME; IP; FB; CYBS; CYBL AND INHIBITOR</scope>
    <scope>COFACTOR</scope>
    <scope>IDENTIFICATION IN THE MITOCHONDRIAL RESPIRATORY CHAIN COMPLEX II</scope>
    <scope>SUBCELLULAR LOCATION</scope>
    <scope>TISSUE SPECIFICITY</scope>
</reference>
<comment type="function">
    <text evidence="2 4 7 8 9">Membrane-bound small subunit (CybS) of the mitochondrial electron transport chain complex II, which together with the membrane-bound large subunit (CybL), anchor the catalytic subunits to the inner mitochondria membrane (PubMed:10743611, PubMed:17933581, PubMed:2843227, PubMed:7822332, PubMed:8435436). During the parasitic larvae and adult stages, which occur in an anaerobic environment, complex II acts as a fumarate reductase by transferring electrons from rhodoquinol to fumarate (PubMed:10743611, PubMed:17933581, PubMed:2843227, PubMed:7822332, PubMed:8435436).</text>
</comment>
<comment type="cofactor">
    <cofactor evidence="1">
        <name>heme b</name>
        <dbReference type="ChEBI" id="CHEBI:60344"/>
    </cofactor>
    <text evidence="5 6">The heme b is bound between the two transmembrane subunits CybS and CybL.</text>
</comment>
<comment type="subunit">
    <text evidence="2 3 4 5 6 7 8 9">Component of the mitochondrial electron transport chain complex II composed of four subunits: a flavoprotein (Fp), an iron-sulfur protein (Ip), and a large cytochrome b (CybL) subunit and a small cytochrome b (CybS) subunit (PubMed:10743611, PubMed:12742584, PubMed:17933581, PubMed:22577165, PubMed:26198225, PubMed:2843227, PubMed:7822332, PubMed:8435436). There are 2 developmental stage-specific forms of complex II which have the Ip and CybL subunits in common (PubMed:10743611, PubMed:12742584, PubMed:17933581, PubMed:7822332). Complex II from the free-living larvae (aerobic environment) acts as a succinate dehydrogenase and is composed of the common subunit Ip and CybL and the stage specific subunits FpL and CybSL (PubMed:12742584, PubMed:17933581, PubMed:7822332). Complex II from parasitic larvae and adults (anaerobic environment) acts as a fumarate reductase and is composed of the common subunit Ip and CybL and the stage specific subunits FpA and CybSA (PubMed:12742584, PubMed:17933581, PubMed:7822332).</text>
</comment>
<comment type="subcellular location">
    <subcellularLocation>
        <location evidence="2 3 4 5 6 7 8 9">Mitochondrion inner membrane</location>
        <topology evidence="5 6">Multi-pass membrane protein</topology>
    </subcellularLocation>
</comment>
<comment type="tissue specificity">
    <text evidence="2 3 4 5 6 7 8 9">Expressed in adult muscles (at protein level).</text>
</comment>
<comment type="developmental stage">
    <text evidence="2 3 4">Not expressed in L2 and L3 larvae (at protein level) (PubMed:10743611, PubMed:12742584). Expressed at very low level in L3 larvae (at protein level) (PubMed:17933581). Expressed in host lung L3 larvae (at protein level) (PubMed:17933581).</text>
</comment>
<comment type="similarity">
    <text evidence="13">Belongs to the CybS family.</text>
</comment>
<sequence>MLSAVRRAIPLSARILRTSLIQRCAGATSAAVTGAAPPQFDPIAAEKGFKPLHSHGTLFKIERYFAAAMVPLIPAAYFIHGREMDLCLALALTLHVHWGVWGVVNDYGRPFVLGDTLAAAVRVGAYIFTACLLAGLLYFNEHDVGLTRAFEMVWEL</sequence>